<evidence type="ECO:0000255" key="1">
    <source>
        <dbReference type="HAMAP-Rule" id="MF_00031"/>
    </source>
</evidence>
<comment type="function">
    <text evidence="1">The RuvA-RuvB-RuvC complex processes Holliday junction (HJ) DNA during genetic recombination and DNA repair, while the RuvA-RuvB complex plays an important role in the rescue of blocked DNA replication forks via replication fork reversal (RFR). RuvA specifically binds to HJ cruciform DNA, conferring on it an open structure. The RuvB hexamer acts as an ATP-dependent pump, pulling dsDNA into and through the RuvAB complex. HJ branch migration allows RuvC to scan DNA until it finds its consensus sequence, where it cleaves and resolves the cruciform DNA.</text>
</comment>
<comment type="subunit">
    <text evidence="1">Homotetramer. Forms an RuvA(8)-RuvB(12)-Holliday junction (HJ) complex. HJ DNA is sandwiched between 2 RuvA tetramers; dsDNA enters through RuvA and exits via RuvB. An RuvB hexamer assembles on each DNA strand where it exits the tetramer. Each RuvB hexamer is contacted by two RuvA subunits (via domain III) on 2 adjacent RuvB subunits; this complex drives branch migration. In the full resolvosome a probable DNA-RuvA(4)-RuvB(12)-RuvC(2) complex forms which resolves the HJ.</text>
</comment>
<comment type="subcellular location">
    <subcellularLocation>
        <location evidence="1">Cytoplasm</location>
    </subcellularLocation>
</comment>
<comment type="domain">
    <text evidence="1">Has three domains with a flexible linker between the domains II and III and assumes an 'L' shape. Domain III is highly mobile and contacts RuvB.</text>
</comment>
<comment type="similarity">
    <text evidence="1">Belongs to the RuvA family.</text>
</comment>
<reference key="1">
    <citation type="journal article" date="2004" name="Nat. Biotechnol.">
        <title>The genome sequence of the anaerobic, sulfate-reducing bacterium Desulfovibrio vulgaris Hildenborough.</title>
        <authorList>
            <person name="Heidelberg J.F."/>
            <person name="Seshadri R."/>
            <person name="Haveman S.A."/>
            <person name="Hemme C.L."/>
            <person name="Paulsen I.T."/>
            <person name="Kolonay J.F."/>
            <person name="Eisen J.A."/>
            <person name="Ward N.L."/>
            <person name="Methe B.A."/>
            <person name="Brinkac L.M."/>
            <person name="Daugherty S.C."/>
            <person name="DeBoy R.T."/>
            <person name="Dodson R.J."/>
            <person name="Durkin A.S."/>
            <person name="Madupu R."/>
            <person name="Nelson W.C."/>
            <person name="Sullivan S.A."/>
            <person name="Fouts D.E."/>
            <person name="Haft D.H."/>
            <person name="Selengut J."/>
            <person name="Peterson J.D."/>
            <person name="Davidsen T.M."/>
            <person name="Zafar N."/>
            <person name="Zhou L."/>
            <person name="Radune D."/>
            <person name="Dimitrov G."/>
            <person name="Hance M."/>
            <person name="Tran K."/>
            <person name="Khouri H.M."/>
            <person name="Gill J."/>
            <person name="Utterback T.R."/>
            <person name="Feldblyum T.V."/>
            <person name="Wall J.D."/>
            <person name="Voordouw G."/>
            <person name="Fraser C.M."/>
        </authorList>
    </citation>
    <scope>NUCLEOTIDE SEQUENCE [LARGE SCALE GENOMIC DNA]</scope>
    <source>
        <strain>ATCC 29579 / DSM 644 / CCUG 34227 / NCIMB 8303 / VKM B-1760 / Hildenborough</strain>
    </source>
</reference>
<keyword id="KW-0963">Cytoplasm</keyword>
<keyword id="KW-0227">DNA damage</keyword>
<keyword id="KW-0233">DNA recombination</keyword>
<keyword id="KW-0234">DNA repair</keyword>
<keyword id="KW-0238">DNA-binding</keyword>
<keyword id="KW-1185">Reference proteome</keyword>
<gene>
    <name evidence="1" type="primary">ruvA</name>
    <name type="ordered locus">DVU_2256</name>
</gene>
<protein>
    <recommendedName>
        <fullName evidence="1">Holliday junction branch migration complex subunit RuvA</fullName>
    </recommendedName>
</protein>
<feature type="chain" id="PRO_0000224864" description="Holliday junction branch migration complex subunit RuvA">
    <location>
        <begin position="1"/>
        <end position="202"/>
    </location>
</feature>
<feature type="region of interest" description="Domain I" evidence="1">
    <location>
        <begin position="1"/>
        <end position="65"/>
    </location>
</feature>
<feature type="region of interest" description="Domain II" evidence="1">
    <location>
        <begin position="66"/>
        <end position="144"/>
    </location>
</feature>
<feature type="region of interest" description="Flexible linker" evidence="1">
    <location>
        <begin position="145"/>
        <end position="155"/>
    </location>
</feature>
<feature type="region of interest" description="Domain III" evidence="1">
    <location>
        <begin position="155"/>
        <end position="202"/>
    </location>
</feature>
<proteinExistence type="inferred from homology"/>
<sequence length="202" mass="21528">MIAYVEGRLAEVAGNACVVVTDGGVGYEVFVPGHTLARLPDKGGRVSFFISTEVREDALELYGFATWDERQTFIVLTSISKVGAKTGLAILSQFRPDDLRRLVVEDDVLALTRVSGIGKKTAQHIFLELKYKLKVEDLPAAAPLVTGGAPGGVFRDALAGLANLGYGEEEASHVLKDVLHGEPDLDVGGALRAALRALARGR</sequence>
<accession>Q729U3</accession>
<name>RUVA_NITV2</name>
<dbReference type="EMBL" id="AE017285">
    <property type="protein sequence ID" value="AAS96729.1"/>
    <property type="molecule type" value="Genomic_DNA"/>
</dbReference>
<dbReference type="RefSeq" id="WP_010939531.1">
    <property type="nucleotide sequence ID" value="NC_002937.3"/>
</dbReference>
<dbReference type="RefSeq" id="YP_011469.1">
    <property type="nucleotide sequence ID" value="NC_002937.3"/>
</dbReference>
<dbReference type="SMR" id="Q729U3"/>
<dbReference type="STRING" id="882.DVU_2256"/>
<dbReference type="PaxDb" id="882-DVU_2256"/>
<dbReference type="EnsemblBacteria" id="AAS96729">
    <property type="protein sequence ID" value="AAS96729"/>
    <property type="gene ID" value="DVU_2256"/>
</dbReference>
<dbReference type="KEGG" id="dvu:DVU_2256"/>
<dbReference type="PATRIC" id="fig|882.5.peg.2050"/>
<dbReference type="eggNOG" id="COG0632">
    <property type="taxonomic scope" value="Bacteria"/>
</dbReference>
<dbReference type="HOGENOM" id="CLU_087936_0_0_7"/>
<dbReference type="OrthoDB" id="5293449at2"/>
<dbReference type="PhylomeDB" id="Q729U3"/>
<dbReference type="Proteomes" id="UP000002194">
    <property type="component" value="Chromosome"/>
</dbReference>
<dbReference type="GO" id="GO:0005737">
    <property type="term" value="C:cytoplasm"/>
    <property type="evidence" value="ECO:0007669"/>
    <property type="project" value="UniProtKB-SubCell"/>
</dbReference>
<dbReference type="GO" id="GO:0009379">
    <property type="term" value="C:Holliday junction helicase complex"/>
    <property type="evidence" value="ECO:0007669"/>
    <property type="project" value="InterPro"/>
</dbReference>
<dbReference type="GO" id="GO:0048476">
    <property type="term" value="C:Holliday junction resolvase complex"/>
    <property type="evidence" value="ECO:0007669"/>
    <property type="project" value="UniProtKB-UniRule"/>
</dbReference>
<dbReference type="GO" id="GO:0005524">
    <property type="term" value="F:ATP binding"/>
    <property type="evidence" value="ECO:0007669"/>
    <property type="project" value="InterPro"/>
</dbReference>
<dbReference type="GO" id="GO:0000400">
    <property type="term" value="F:four-way junction DNA binding"/>
    <property type="evidence" value="ECO:0007669"/>
    <property type="project" value="UniProtKB-UniRule"/>
</dbReference>
<dbReference type="GO" id="GO:0009378">
    <property type="term" value="F:four-way junction helicase activity"/>
    <property type="evidence" value="ECO:0007669"/>
    <property type="project" value="InterPro"/>
</dbReference>
<dbReference type="GO" id="GO:0006310">
    <property type="term" value="P:DNA recombination"/>
    <property type="evidence" value="ECO:0007669"/>
    <property type="project" value="UniProtKB-UniRule"/>
</dbReference>
<dbReference type="GO" id="GO:0006281">
    <property type="term" value="P:DNA repair"/>
    <property type="evidence" value="ECO:0007669"/>
    <property type="project" value="UniProtKB-UniRule"/>
</dbReference>
<dbReference type="CDD" id="cd14332">
    <property type="entry name" value="UBA_RuvA_C"/>
    <property type="match status" value="1"/>
</dbReference>
<dbReference type="Gene3D" id="1.10.150.20">
    <property type="entry name" value="5' to 3' exonuclease, C-terminal subdomain"/>
    <property type="match status" value="1"/>
</dbReference>
<dbReference type="Gene3D" id="1.10.8.10">
    <property type="entry name" value="DNA helicase RuvA subunit, C-terminal domain"/>
    <property type="match status" value="1"/>
</dbReference>
<dbReference type="Gene3D" id="2.40.50.140">
    <property type="entry name" value="Nucleic acid-binding proteins"/>
    <property type="match status" value="1"/>
</dbReference>
<dbReference type="HAMAP" id="MF_00031">
    <property type="entry name" value="DNA_HJ_migration_RuvA"/>
    <property type="match status" value="1"/>
</dbReference>
<dbReference type="InterPro" id="IPR013849">
    <property type="entry name" value="DNA_helicase_Holl-junc_RuvA_I"/>
</dbReference>
<dbReference type="InterPro" id="IPR012340">
    <property type="entry name" value="NA-bd_OB-fold"/>
</dbReference>
<dbReference type="InterPro" id="IPR000085">
    <property type="entry name" value="RuvA"/>
</dbReference>
<dbReference type="InterPro" id="IPR010994">
    <property type="entry name" value="RuvA_2-like"/>
</dbReference>
<dbReference type="InterPro" id="IPR011114">
    <property type="entry name" value="RuvA_C"/>
</dbReference>
<dbReference type="InterPro" id="IPR036267">
    <property type="entry name" value="RuvA_C_sf"/>
</dbReference>
<dbReference type="NCBIfam" id="TIGR00084">
    <property type="entry name" value="ruvA"/>
    <property type="match status" value="1"/>
</dbReference>
<dbReference type="Pfam" id="PF14520">
    <property type="entry name" value="HHH_5"/>
    <property type="match status" value="1"/>
</dbReference>
<dbReference type="Pfam" id="PF07499">
    <property type="entry name" value="RuvA_C"/>
    <property type="match status" value="1"/>
</dbReference>
<dbReference type="Pfam" id="PF01330">
    <property type="entry name" value="RuvA_N"/>
    <property type="match status" value="1"/>
</dbReference>
<dbReference type="SUPFAM" id="SSF46929">
    <property type="entry name" value="DNA helicase RuvA subunit, C-terminal domain"/>
    <property type="match status" value="1"/>
</dbReference>
<dbReference type="SUPFAM" id="SSF50249">
    <property type="entry name" value="Nucleic acid-binding proteins"/>
    <property type="match status" value="1"/>
</dbReference>
<dbReference type="SUPFAM" id="SSF47781">
    <property type="entry name" value="RuvA domain 2-like"/>
    <property type="match status" value="1"/>
</dbReference>
<organism>
    <name type="scientific">Nitratidesulfovibrio vulgaris (strain ATCC 29579 / DSM 644 / CCUG 34227 / NCIMB 8303 / VKM B-1760 / Hildenborough)</name>
    <name type="common">Desulfovibrio vulgaris</name>
    <dbReference type="NCBI Taxonomy" id="882"/>
    <lineage>
        <taxon>Bacteria</taxon>
        <taxon>Pseudomonadati</taxon>
        <taxon>Thermodesulfobacteriota</taxon>
        <taxon>Desulfovibrionia</taxon>
        <taxon>Desulfovibrionales</taxon>
        <taxon>Desulfovibrionaceae</taxon>
        <taxon>Nitratidesulfovibrio</taxon>
    </lineage>
</organism>